<organism>
    <name type="scientific">Ruthia magnifica subsp. Calyptogena magnifica</name>
    <dbReference type="NCBI Taxonomy" id="413404"/>
    <lineage>
        <taxon>Bacteria</taxon>
        <taxon>Pseudomonadati</taxon>
        <taxon>Pseudomonadota</taxon>
        <taxon>Gammaproteobacteria</taxon>
        <taxon>Candidatus Pseudothioglobaceae</taxon>
        <taxon>Candidatus Ruthturnera</taxon>
    </lineage>
</organism>
<sequence>MNKKNLLSFNQNALNDFFVGLGEKPYRTKQIMQWIYKDHEFDFEKMLNFSKSLRDELSKVVCVELLRVVKQNFILDGVIKWVLALDKNNHIEMIYIPEKNRGTLCISSQVGCGLACTFCSTGMQGFNKNLTTAEIIAQVLIASRYLNSKTKRISNVVFMGMGEPLLNEHAVYNACDLLLDDLAFGLSRRKVTISTSGVVPAMLRMSERTPVSLAVSLHASDDHLRNELVPINQKYSLEELLKACKVYLQAGTQKRHILFEYVMLKGVNDSIEHANKLVKLLKGISAKINLIPFNSFEKTQYQTSSAQTIEKFQNILYHQGIRTMTRRTRGEDIGGACGQLAGKVLDKTKRTYDRRH</sequence>
<keyword id="KW-0004">4Fe-4S</keyword>
<keyword id="KW-0963">Cytoplasm</keyword>
<keyword id="KW-1015">Disulfide bond</keyword>
<keyword id="KW-0408">Iron</keyword>
<keyword id="KW-0411">Iron-sulfur</keyword>
<keyword id="KW-0479">Metal-binding</keyword>
<keyword id="KW-0489">Methyltransferase</keyword>
<keyword id="KW-0698">rRNA processing</keyword>
<keyword id="KW-0949">S-adenosyl-L-methionine</keyword>
<keyword id="KW-0808">Transferase</keyword>
<keyword id="KW-0819">tRNA processing</keyword>
<feature type="chain" id="PRO_0000350379" description="Dual-specificity RNA methyltransferase RlmN">
    <location>
        <begin position="1"/>
        <end position="356"/>
    </location>
</feature>
<feature type="domain" description="Radical SAM core" evidence="2">
    <location>
        <begin position="98"/>
        <end position="327"/>
    </location>
</feature>
<feature type="active site" description="Proton acceptor" evidence="1">
    <location>
        <position position="92"/>
    </location>
</feature>
<feature type="active site" description="S-methylcysteine intermediate" evidence="1">
    <location>
        <position position="337"/>
    </location>
</feature>
<feature type="binding site" evidence="1">
    <location>
        <position position="112"/>
    </location>
    <ligand>
        <name>[4Fe-4S] cluster</name>
        <dbReference type="ChEBI" id="CHEBI:49883"/>
        <note>4Fe-4S-S-AdoMet</note>
    </ligand>
</feature>
<feature type="binding site" evidence="1">
    <location>
        <position position="116"/>
    </location>
    <ligand>
        <name>[4Fe-4S] cluster</name>
        <dbReference type="ChEBI" id="CHEBI:49883"/>
        <note>4Fe-4S-S-AdoMet</note>
    </ligand>
</feature>
<feature type="binding site" evidence="1">
    <location>
        <position position="119"/>
    </location>
    <ligand>
        <name>[4Fe-4S] cluster</name>
        <dbReference type="ChEBI" id="CHEBI:49883"/>
        <note>4Fe-4S-S-AdoMet</note>
    </ligand>
</feature>
<feature type="binding site" evidence="1">
    <location>
        <begin position="162"/>
        <end position="163"/>
    </location>
    <ligand>
        <name>S-adenosyl-L-methionine</name>
        <dbReference type="ChEBI" id="CHEBI:59789"/>
    </ligand>
</feature>
<feature type="binding site" evidence="1">
    <location>
        <position position="194"/>
    </location>
    <ligand>
        <name>S-adenosyl-L-methionine</name>
        <dbReference type="ChEBI" id="CHEBI:59789"/>
    </ligand>
</feature>
<feature type="binding site" evidence="1">
    <location>
        <begin position="216"/>
        <end position="218"/>
    </location>
    <ligand>
        <name>S-adenosyl-L-methionine</name>
        <dbReference type="ChEBI" id="CHEBI:59789"/>
    </ligand>
</feature>
<feature type="binding site" evidence="1">
    <location>
        <position position="294"/>
    </location>
    <ligand>
        <name>S-adenosyl-L-methionine</name>
        <dbReference type="ChEBI" id="CHEBI:59789"/>
    </ligand>
</feature>
<feature type="disulfide bond" description="(transient)" evidence="1">
    <location>
        <begin position="105"/>
        <end position="337"/>
    </location>
</feature>
<protein>
    <recommendedName>
        <fullName evidence="1">Dual-specificity RNA methyltransferase RlmN</fullName>
        <ecNumber evidence="1">2.1.1.192</ecNumber>
    </recommendedName>
    <alternativeName>
        <fullName evidence="1">23S rRNA (adenine(2503)-C(2))-methyltransferase</fullName>
    </alternativeName>
    <alternativeName>
        <fullName evidence="1">23S rRNA m2A2503 methyltransferase</fullName>
    </alternativeName>
    <alternativeName>
        <fullName evidence="1">Ribosomal RNA large subunit methyltransferase N</fullName>
    </alternativeName>
    <alternativeName>
        <fullName evidence="1">tRNA (adenine(37)-C(2))-methyltransferase</fullName>
    </alternativeName>
    <alternativeName>
        <fullName evidence="1">tRNA m2A37 methyltransferase</fullName>
    </alternativeName>
</protein>
<dbReference type="EC" id="2.1.1.192" evidence="1"/>
<dbReference type="EMBL" id="CP000488">
    <property type="protein sequence ID" value="ABL02151.1"/>
    <property type="molecule type" value="Genomic_DNA"/>
</dbReference>
<dbReference type="RefSeq" id="WP_011737776.1">
    <property type="nucleotide sequence ID" value="NC_008610.1"/>
</dbReference>
<dbReference type="SMR" id="A1AW44"/>
<dbReference type="STRING" id="413404.Rmag_0382"/>
<dbReference type="KEGG" id="rma:Rmag_0382"/>
<dbReference type="eggNOG" id="COG0820">
    <property type="taxonomic scope" value="Bacteria"/>
</dbReference>
<dbReference type="HOGENOM" id="CLU_029101_0_0_6"/>
<dbReference type="OrthoDB" id="9793973at2"/>
<dbReference type="Proteomes" id="UP000002587">
    <property type="component" value="Chromosome"/>
</dbReference>
<dbReference type="GO" id="GO:0005737">
    <property type="term" value="C:cytoplasm"/>
    <property type="evidence" value="ECO:0007669"/>
    <property type="project" value="UniProtKB-SubCell"/>
</dbReference>
<dbReference type="GO" id="GO:0051539">
    <property type="term" value="F:4 iron, 4 sulfur cluster binding"/>
    <property type="evidence" value="ECO:0007669"/>
    <property type="project" value="UniProtKB-UniRule"/>
</dbReference>
<dbReference type="GO" id="GO:0046872">
    <property type="term" value="F:metal ion binding"/>
    <property type="evidence" value="ECO:0007669"/>
    <property type="project" value="UniProtKB-KW"/>
</dbReference>
<dbReference type="GO" id="GO:0070040">
    <property type="term" value="F:rRNA (adenine(2503)-C2-)-methyltransferase activity"/>
    <property type="evidence" value="ECO:0007669"/>
    <property type="project" value="UniProtKB-UniRule"/>
</dbReference>
<dbReference type="GO" id="GO:0019843">
    <property type="term" value="F:rRNA binding"/>
    <property type="evidence" value="ECO:0007669"/>
    <property type="project" value="UniProtKB-UniRule"/>
</dbReference>
<dbReference type="GO" id="GO:0002935">
    <property type="term" value="F:tRNA (adenine(37)-C2)-methyltransferase activity"/>
    <property type="evidence" value="ECO:0007669"/>
    <property type="project" value="UniProtKB-UniRule"/>
</dbReference>
<dbReference type="GO" id="GO:0000049">
    <property type="term" value="F:tRNA binding"/>
    <property type="evidence" value="ECO:0007669"/>
    <property type="project" value="UniProtKB-UniRule"/>
</dbReference>
<dbReference type="GO" id="GO:0070475">
    <property type="term" value="P:rRNA base methylation"/>
    <property type="evidence" value="ECO:0007669"/>
    <property type="project" value="UniProtKB-UniRule"/>
</dbReference>
<dbReference type="GO" id="GO:0030488">
    <property type="term" value="P:tRNA methylation"/>
    <property type="evidence" value="ECO:0007669"/>
    <property type="project" value="UniProtKB-UniRule"/>
</dbReference>
<dbReference type="CDD" id="cd01335">
    <property type="entry name" value="Radical_SAM"/>
    <property type="match status" value="1"/>
</dbReference>
<dbReference type="FunFam" id="3.20.20.70:FF:000014">
    <property type="entry name" value="Probable dual-specificity RNA methyltransferase RlmN"/>
    <property type="match status" value="1"/>
</dbReference>
<dbReference type="Gene3D" id="1.10.150.530">
    <property type="match status" value="1"/>
</dbReference>
<dbReference type="Gene3D" id="3.20.20.70">
    <property type="entry name" value="Aldolase class I"/>
    <property type="match status" value="1"/>
</dbReference>
<dbReference type="HAMAP" id="MF_01849">
    <property type="entry name" value="RNA_methyltr_RlmN"/>
    <property type="match status" value="1"/>
</dbReference>
<dbReference type="InterPro" id="IPR013785">
    <property type="entry name" value="Aldolase_TIM"/>
</dbReference>
<dbReference type="InterPro" id="IPR040072">
    <property type="entry name" value="Methyltransferase_A"/>
</dbReference>
<dbReference type="InterPro" id="IPR048641">
    <property type="entry name" value="RlmN_N"/>
</dbReference>
<dbReference type="InterPro" id="IPR027492">
    <property type="entry name" value="RNA_MTrfase_RlmN"/>
</dbReference>
<dbReference type="InterPro" id="IPR004383">
    <property type="entry name" value="rRNA_lsu_MTrfase_RlmN/Cfr"/>
</dbReference>
<dbReference type="InterPro" id="IPR007197">
    <property type="entry name" value="rSAM"/>
</dbReference>
<dbReference type="NCBIfam" id="TIGR00048">
    <property type="entry name" value="rRNA_mod_RlmN"/>
    <property type="match status" value="1"/>
</dbReference>
<dbReference type="PANTHER" id="PTHR30544">
    <property type="entry name" value="23S RRNA METHYLTRANSFERASE"/>
    <property type="match status" value="1"/>
</dbReference>
<dbReference type="PANTHER" id="PTHR30544:SF5">
    <property type="entry name" value="RADICAL SAM CORE DOMAIN-CONTAINING PROTEIN"/>
    <property type="match status" value="1"/>
</dbReference>
<dbReference type="Pfam" id="PF04055">
    <property type="entry name" value="Radical_SAM"/>
    <property type="match status" value="1"/>
</dbReference>
<dbReference type="Pfam" id="PF21016">
    <property type="entry name" value="RlmN_N"/>
    <property type="match status" value="1"/>
</dbReference>
<dbReference type="PIRSF" id="PIRSF006004">
    <property type="entry name" value="CHP00048"/>
    <property type="match status" value="1"/>
</dbReference>
<dbReference type="SFLD" id="SFLDF00275">
    <property type="entry name" value="adenosine_C2_methyltransferase"/>
    <property type="match status" value="1"/>
</dbReference>
<dbReference type="SFLD" id="SFLDS00029">
    <property type="entry name" value="Radical_SAM"/>
    <property type="match status" value="1"/>
</dbReference>
<dbReference type="SUPFAM" id="SSF102114">
    <property type="entry name" value="Radical SAM enzymes"/>
    <property type="match status" value="1"/>
</dbReference>
<dbReference type="PROSITE" id="PS51918">
    <property type="entry name" value="RADICAL_SAM"/>
    <property type="match status" value="1"/>
</dbReference>
<comment type="function">
    <text evidence="1">Specifically methylates position 2 of adenine 2503 in 23S rRNA and position 2 of adenine 37 in tRNAs. m2A2503 modification seems to play a crucial role in the proofreading step occurring at the peptidyl transferase center and thus would serve to optimize ribosomal fidelity.</text>
</comment>
<comment type="catalytic activity">
    <reaction evidence="1">
        <text>adenosine(2503) in 23S rRNA + 2 reduced [2Fe-2S]-[ferredoxin] + 2 S-adenosyl-L-methionine = 2-methyladenosine(2503) in 23S rRNA + 5'-deoxyadenosine + L-methionine + 2 oxidized [2Fe-2S]-[ferredoxin] + S-adenosyl-L-homocysteine</text>
        <dbReference type="Rhea" id="RHEA:42916"/>
        <dbReference type="Rhea" id="RHEA-COMP:10000"/>
        <dbReference type="Rhea" id="RHEA-COMP:10001"/>
        <dbReference type="Rhea" id="RHEA-COMP:10152"/>
        <dbReference type="Rhea" id="RHEA-COMP:10282"/>
        <dbReference type="ChEBI" id="CHEBI:17319"/>
        <dbReference type="ChEBI" id="CHEBI:33737"/>
        <dbReference type="ChEBI" id="CHEBI:33738"/>
        <dbReference type="ChEBI" id="CHEBI:57844"/>
        <dbReference type="ChEBI" id="CHEBI:57856"/>
        <dbReference type="ChEBI" id="CHEBI:59789"/>
        <dbReference type="ChEBI" id="CHEBI:74411"/>
        <dbReference type="ChEBI" id="CHEBI:74497"/>
        <dbReference type="EC" id="2.1.1.192"/>
    </reaction>
</comment>
<comment type="catalytic activity">
    <reaction evidence="1">
        <text>adenosine(37) in tRNA + 2 reduced [2Fe-2S]-[ferredoxin] + 2 S-adenosyl-L-methionine = 2-methyladenosine(37) in tRNA + 5'-deoxyadenosine + L-methionine + 2 oxidized [2Fe-2S]-[ferredoxin] + S-adenosyl-L-homocysteine</text>
        <dbReference type="Rhea" id="RHEA:43332"/>
        <dbReference type="Rhea" id="RHEA-COMP:10000"/>
        <dbReference type="Rhea" id="RHEA-COMP:10001"/>
        <dbReference type="Rhea" id="RHEA-COMP:10162"/>
        <dbReference type="Rhea" id="RHEA-COMP:10485"/>
        <dbReference type="ChEBI" id="CHEBI:17319"/>
        <dbReference type="ChEBI" id="CHEBI:33737"/>
        <dbReference type="ChEBI" id="CHEBI:33738"/>
        <dbReference type="ChEBI" id="CHEBI:57844"/>
        <dbReference type="ChEBI" id="CHEBI:57856"/>
        <dbReference type="ChEBI" id="CHEBI:59789"/>
        <dbReference type="ChEBI" id="CHEBI:74411"/>
        <dbReference type="ChEBI" id="CHEBI:74497"/>
        <dbReference type="EC" id="2.1.1.192"/>
    </reaction>
</comment>
<comment type="cofactor">
    <cofactor evidence="1">
        <name>[4Fe-4S] cluster</name>
        <dbReference type="ChEBI" id="CHEBI:49883"/>
    </cofactor>
    <text evidence="1">Binds 1 [4Fe-4S] cluster. The cluster is coordinated with 3 cysteines and an exchangeable S-adenosyl-L-methionine.</text>
</comment>
<comment type="subcellular location">
    <subcellularLocation>
        <location evidence="1">Cytoplasm</location>
    </subcellularLocation>
</comment>
<comment type="miscellaneous">
    <text evidence="1">Reaction proceeds by a ping-pong mechanism involving intermediate methylation of a conserved cysteine residue.</text>
</comment>
<comment type="similarity">
    <text evidence="1">Belongs to the radical SAM superfamily. RlmN family.</text>
</comment>
<name>RLMN_RUTMC</name>
<reference key="1">
    <citation type="journal article" date="2007" name="Science">
        <title>The Calyptogena magnifica chemoautotrophic symbiont genome.</title>
        <authorList>
            <person name="Newton I.L.G."/>
            <person name="Woyke T."/>
            <person name="Auchtung T.A."/>
            <person name="Dilly G.F."/>
            <person name="Dutton R.J."/>
            <person name="Fisher M.C."/>
            <person name="Fontanez K.M."/>
            <person name="Lau E."/>
            <person name="Stewart F.J."/>
            <person name="Richardson P.M."/>
            <person name="Barry K.W."/>
            <person name="Saunders E."/>
            <person name="Detter J.C."/>
            <person name="Wu D."/>
            <person name="Eisen J.A."/>
            <person name="Cavanaugh C.M."/>
        </authorList>
    </citation>
    <scope>NUCLEOTIDE SEQUENCE [LARGE SCALE GENOMIC DNA]</scope>
</reference>
<proteinExistence type="inferred from homology"/>
<evidence type="ECO:0000255" key="1">
    <source>
        <dbReference type="HAMAP-Rule" id="MF_01849"/>
    </source>
</evidence>
<evidence type="ECO:0000255" key="2">
    <source>
        <dbReference type="PROSITE-ProRule" id="PRU01266"/>
    </source>
</evidence>
<accession>A1AW44</accession>
<gene>
    <name evidence="1" type="primary">rlmN</name>
    <name type="ordered locus">Rmag_0382</name>
</gene>